<sequence>MTVSASKTAQQLKYIKDSIKTIPDYPKAGILFRDVTSLLENPKAYSASIKLLSEHYSESGVTKVVGTEARGFLFGAPVALALGVGFVPVRKPGKLPRETISESYELEYGTDTLEIHTDSIQPGDKVLVVDDLLATGGTIEATVKLIRRLGGEVVHAAFIINLPELGGEARLTQQGIHCYSLVSFDGH</sequence>
<feature type="chain" id="PRO_1000089019" description="Adenine phosphoribosyltransferase">
    <location>
        <begin position="1"/>
        <end position="187"/>
    </location>
</feature>
<gene>
    <name evidence="1" type="primary">apt</name>
    <name type="ordered locus">YpAngola_A2888</name>
</gene>
<reference key="1">
    <citation type="journal article" date="2010" name="J. Bacteriol.">
        <title>Genome sequence of the deep-rooted Yersinia pestis strain Angola reveals new insights into the evolution and pangenome of the plague bacterium.</title>
        <authorList>
            <person name="Eppinger M."/>
            <person name="Worsham P.L."/>
            <person name="Nikolich M.P."/>
            <person name="Riley D.R."/>
            <person name="Sebastian Y."/>
            <person name="Mou S."/>
            <person name="Achtman M."/>
            <person name="Lindler L.E."/>
            <person name="Ravel J."/>
        </authorList>
    </citation>
    <scope>NUCLEOTIDE SEQUENCE [LARGE SCALE GENOMIC DNA]</scope>
    <source>
        <strain>Angola</strain>
    </source>
</reference>
<evidence type="ECO:0000255" key="1">
    <source>
        <dbReference type="HAMAP-Rule" id="MF_00004"/>
    </source>
</evidence>
<keyword id="KW-0963">Cytoplasm</keyword>
<keyword id="KW-0328">Glycosyltransferase</keyword>
<keyword id="KW-0660">Purine salvage</keyword>
<keyword id="KW-0808">Transferase</keyword>
<accession>A9R0Q1</accession>
<proteinExistence type="inferred from homology"/>
<comment type="function">
    <text evidence="1">Catalyzes a salvage reaction resulting in the formation of AMP, that is energically less costly than de novo synthesis.</text>
</comment>
<comment type="catalytic activity">
    <reaction evidence="1">
        <text>AMP + diphosphate = 5-phospho-alpha-D-ribose 1-diphosphate + adenine</text>
        <dbReference type="Rhea" id="RHEA:16609"/>
        <dbReference type="ChEBI" id="CHEBI:16708"/>
        <dbReference type="ChEBI" id="CHEBI:33019"/>
        <dbReference type="ChEBI" id="CHEBI:58017"/>
        <dbReference type="ChEBI" id="CHEBI:456215"/>
        <dbReference type="EC" id="2.4.2.7"/>
    </reaction>
</comment>
<comment type="pathway">
    <text evidence="1">Purine metabolism; AMP biosynthesis via salvage pathway; AMP from adenine: step 1/1.</text>
</comment>
<comment type="subunit">
    <text evidence="1">Homodimer.</text>
</comment>
<comment type="subcellular location">
    <subcellularLocation>
        <location evidence="1">Cytoplasm</location>
    </subcellularLocation>
</comment>
<comment type="similarity">
    <text evidence="1">Belongs to the purine/pyrimidine phosphoribosyltransferase family.</text>
</comment>
<organism>
    <name type="scientific">Yersinia pestis bv. Antiqua (strain Angola)</name>
    <dbReference type="NCBI Taxonomy" id="349746"/>
    <lineage>
        <taxon>Bacteria</taxon>
        <taxon>Pseudomonadati</taxon>
        <taxon>Pseudomonadota</taxon>
        <taxon>Gammaproteobacteria</taxon>
        <taxon>Enterobacterales</taxon>
        <taxon>Yersiniaceae</taxon>
        <taxon>Yersinia</taxon>
    </lineage>
</organism>
<name>APT_YERPG</name>
<dbReference type="EC" id="2.4.2.7" evidence="1"/>
<dbReference type="EMBL" id="CP000901">
    <property type="protein sequence ID" value="ABX88657.1"/>
    <property type="molecule type" value="Genomic_DNA"/>
</dbReference>
<dbReference type="RefSeq" id="WP_002208606.1">
    <property type="nucleotide sequence ID" value="NZ_CP009935.1"/>
</dbReference>
<dbReference type="SMR" id="A9R0Q1"/>
<dbReference type="GeneID" id="57975588"/>
<dbReference type="KEGG" id="ypg:YpAngola_A2888"/>
<dbReference type="PATRIC" id="fig|349746.12.peg.3926"/>
<dbReference type="UniPathway" id="UPA00588">
    <property type="reaction ID" value="UER00646"/>
</dbReference>
<dbReference type="GO" id="GO:0005829">
    <property type="term" value="C:cytosol"/>
    <property type="evidence" value="ECO:0007669"/>
    <property type="project" value="TreeGrafter"/>
</dbReference>
<dbReference type="GO" id="GO:0003999">
    <property type="term" value="F:adenine phosphoribosyltransferase activity"/>
    <property type="evidence" value="ECO:0007669"/>
    <property type="project" value="UniProtKB-UniRule"/>
</dbReference>
<dbReference type="GO" id="GO:0006168">
    <property type="term" value="P:adenine salvage"/>
    <property type="evidence" value="ECO:0007669"/>
    <property type="project" value="InterPro"/>
</dbReference>
<dbReference type="GO" id="GO:0044209">
    <property type="term" value="P:AMP salvage"/>
    <property type="evidence" value="ECO:0007669"/>
    <property type="project" value="UniProtKB-UniRule"/>
</dbReference>
<dbReference type="GO" id="GO:0006166">
    <property type="term" value="P:purine ribonucleoside salvage"/>
    <property type="evidence" value="ECO:0007669"/>
    <property type="project" value="UniProtKB-KW"/>
</dbReference>
<dbReference type="CDD" id="cd06223">
    <property type="entry name" value="PRTases_typeI"/>
    <property type="match status" value="1"/>
</dbReference>
<dbReference type="FunFam" id="3.40.50.2020:FF:000004">
    <property type="entry name" value="Adenine phosphoribosyltransferase"/>
    <property type="match status" value="1"/>
</dbReference>
<dbReference type="Gene3D" id="3.40.50.2020">
    <property type="match status" value="1"/>
</dbReference>
<dbReference type="HAMAP" id="MF_00004">
    <property type="entry name" value="Aden_phosphoribosyltr"/>
    <property type="match status" value="1"/>
</dbReference>
<dbReference type="InterPro" id="IPR005764">
    <property type="entry name" value="Ade_phspho_trans"/>
</dbReference>
<dbReference type="InterPro" id="IPR050120">
    <property type="entry name" value="Adenine_PRTase"/>
</dbReference>
<dbReference type="InterPro" id="IPR000836">
    <property type="entry name" value="PRibTrfase_dom"/>
</dbReference>
<dbReference type="InterPro" id="IPR029057">
    <property type="entry name" value="PRTase-like"/>
</dbReference>
<dbReference type="NCBIfam" id="TIGR01090">
    <property type="entry name" value="apt"/>
    <property type="match status" value="1"/>
</dbReference>
<dbReference type="NCBIfam" id="NF002632">
    <property type="entry name" value="PRK02304.1-1"/>
    <property type="match status" value="1"/>
</dbReference>
<dbReference type="NCBIfam" id="NF002633">
    <property type="entry name" value="PRK02304.1-2"/>
    <property type="match status" value="1"/>
</dbReference>
<dbReference type="NCBIfam" id="NF002634">
    <property type="entry name" value="PRK02304.1-3"/>
    <property type="match status" value="1"/>
</dbReference>
<dbReference type="NCBIfam" id="NF002636">
    <property type="entry name" value="PRK02304.1-5"/>
    <property type="match status" value="1"/>
</dbReference>
<dbReference type="PANTHER" id="PTHR11776">
    <property type="entry name" value="ADENINE PHOSPHORIBOSYLTRANSFERASE"/>
    <property type="match status" value="1"/>
</dbReference>
<dbReference type="PANTHER" id="PTHR11776:SF7">
    <property type="entry name" value="PHOSPHORIBOSYLTRANSFERASE DOMAIN-CONTAINING PROTEIN"/>
    <property type="match status" value="1"/>
</dbReference>
<dbReference type="Pfam" id="PF00156">
    <property type="entry name" value="Pribosyltran"/>
    <property type="match status" value="1"/>
</dbReference>
<dbReference type="SUPFAM" id="SSF53271">
    <property type="entry name" value="PRTase-like"/>
    <property type="match status" value="1"/>
</dbReference>
<dbReference type="PROSITE" id="PS00103">
    <property type="entry name" value="PUR_PYR_PR_TRANSFER"/>
    <property type="match status" value="1"/>
</dbReference>
<protein>
    <recommendedName>
        <fullName evidence="1">Adenine phosphoribosyltransferase</fullName>
        <shortName evidence="1">APRT</shortName>
        <ecNumber evidence="1">2.4.2.7</ecNumber>
    </recommendedName>
</protein>